<evidence type="ECO:0000255" key="1">
    <source>
        <dbReference type="HAMAP-Rule" id="MF_01364"/>
    </source>
</evidence>
<evidence type="ECO:0000305" key="2"/>
<reference key="1">
    <citation type="journal article" date="2006" name="Proc. Natl. Acad. Sci. U.S.A.">
        <title>Evolution of sensory complexity recorded in a myxobacterial genome.</title>
        <authorList>
            <person name="Goldman B.S."/>
            <person name="Nierman W.C."/>
            <person name="Kaiser D."/>
            <person name="Slater S.C."/>
            <person name="Durkin A.S."/>
            <person name="Eisen J.A."/>
            <person name="Ronning C.M."/>
            <person name="Barbazuk W.B."/>
            <person name="Blanchard M."/>
            <person name="Field C."/>
            <person name="Halling C."/>
            <person name="Hinkle G."/>
            <person name="Iartchuk O."/>
            <person name="Kim H.S."/>
            <person name="Mackenzie C."/>
            <person name="Madupu R."/>
            <person name="Miller N."/>
            <person name="Shvartsbeyn A."/>
            <person name="Sullivan S.A."/>
            <person name="Vaudin M."/>
            <person name="Wiegand R."/>
            <person name="Kaplan H.B."/>
        </authorList>
    </citation>
    <scope>NUCLEOTIDE SEQUENCE [LARGE SCALE GENOMIC DNA]</scope>
    <source>
        <strain>DK1622</strain>
    </source>
</reference>
<dbReference type="EMBL" id="CP000113">
    <property type="protein sequence ID" value="ABF87653.1"/>
    <property type="molecule type" value="Genomic_DNA"/>
</dbReference>
<dbReference type="RefSeq" id="WP_011553348.1">
    <property type="nucleotide sequence ID" value="NC_008095.1"/>
</dbReference>
<dbReference type="SMR" id="Q1D762"/>
<dbReference type="STRING" id="246197.MXAN_3312"/>
<dbReference type="EnsemblBacteria" id="ABF87653">
    <property type="protein sequence ID" value="ABF87653"/>
    <property type="gene ID" value="MXAN_3312"/>
</dbReference>
<dbReference type="GeneID" id="41360665"/>
<dbReference type="KEGG" id="mxa:MXAN_3312"/>
<dbReference type="eggNOG" id="COG0199">
    <property type="taxonomic scope" value="Bacteria"/>
</dbReference>
<dbReference type="HOGENOM" id="CLU_139869_3_0_7"/>
<dbReference type="OrthoDB" id="9810484at2"/>
<dbReference type="Proteomes" id="UP000002402">
    <property type="component" value="Chromosome"/>
</dbReference>
<dbReference type="GO" id="GO:0005737">
    <property type="term" value="C:cytoplasm"/>
    <property type="evidence" value="ECO:0007669"/>
    <property type="project" value="UniProtKB-ARBA"/>
</dbReference>
<dbReference type="GO" id="GO:0015935">
    <property type="term" value="C:small ribosomal subunit"/>
    <property type="evidence" value="ECO:0007669"/>
    <property type="project" value="TreeGrafter"/>
</dbReference>
<dbReference type="GO" id="GO:0019843">
    <property type="term" value="F:rRNA binding"/>
    <property type="evidence" value="ECO:0007669"/>
    <property type="project" value="UniProtKB-UniRule"/>
</dbReference>
<dbReference type="GO" id="GO:0003735">
    <property type="term" value="F:structural constituent of ribosome"/>
    <property type="evidence" value="ECO:0007669"/>
    <property type="project" value="InterPro"/>
</dbReference>
<dbReference type="GO" id="GO:0008270">
    <property type="term" value="F:zinc ion binding"/>
    <property type="evidence" value="ECO:0007669"/>
    <property type="project" value="UniProtKB-UniRule"/>
</dbReference>
<dbReference type="GO" id="GO:0006412">
    <property type="term" value="P:translation"/>
    <property type="evidence" value="ECO:0007669"/>
    <property type="project" value="UniProtKB-UniRule"/>
</dbReference>
<dbReference type="FunFam" id="4.10.830.10:FF:000001">
    <property type="entry name" value="30S ribosomal protein S14 type Z"/>
    <property type="match status" value="1"/>
</dbReference>
<dbReference type="Gene3D" id="4.10.830.10">
    <property type="entry name" value="30s Ribosomal Protein S14, Chain N"/>
    <property type="match status" value="1"/>
</dbReference>
<dbReference type="HAMAP" id="MF_01364_B">
    <property type="entry name" value="Ribosomal_uS14_2_B"/>
    <property type="match status" value="1"/>
</dbReference>
<dbReference type="InterPro" id="IPR001209">
    <property type="entry name" value="Ribosomal_uS14"/>
</dbReference>
<dbReference type="InterPro" id="IPR023053">
    <property type="entry name" value="Ribosomal_uS14_bact"/>
</dbReference>
<dbReference type="InterPro" id="IPR018271">
    <property type="entry name" value="Ribosomal_uS14_CS"/>
</dbReference>
<dbReference type="InterPro" id="IPR043140">
    <property type="entry name" value="Ribosomal_uS14_sf"/>
</dbReference>
<dbReference type="NCBIfam" id="NF005974">
    <property type="entry name" value="PRK08061.1"/>
    <property type="match status" value="1"/>
</dbReference>
<dbReference type="PANTHER" id="PTHR19836">
    <property type="entry name" value="30S RIBOSOMAL PROTEIN S14"/>
    <property type="match status" value="1"/>
</dbReference>
<dbReference type="PANTHER" id="PTHR19836:SF19">
    <property type="entry name" value="SMALL RIBOSOMAL SUBUNIT PROTEIN US14M"/>
    <property type="match status" value="1"/>
</dbReference>
<dbReference type="Pfam" id="PF00253">
    <property type="entry name" value="Ribosomal_S14"/>
    <property type="match status" value="1"/>
</dbReference>
<dbReference type="SUPFAM" id="SSF57716">
    <property type="entry name" value="Glucocorticoid receptor-like (DNA-binding domain)"/>
    <property type="match status" value="1"/>
</dbReference>
<dbReference type="PROSITE" id="PS00527">
    <property type="entry name" value="RIBOSOMAL_S14"/>
    <property type="match status" value="1"/>
</dbReference>
<protein>
    <recommendedName>
        <fullName evidence="1">Small ribosomal subunit protein uS14B</fullName>
    </recommendedName>
    <alternativeName>
        <fullName evidence="2">30S ribosomal protein S14 type Z</fullName>
    </alternativeName>
</protein>
<gene>
    <name evidence="1" type="primary">rpsZ</name>
    <name evidence="1" type="synonym">rpsN1</name>
    <name type="ordered locus">MXAN_3312</name>
</gene>
<accession>Q1D762</accession>
<feature type="chain" id="PRO_0000269124" description="Small ribosomal subunit protein uS14B">
    <location>
        <begin position="1"/>
        <end position="61"/>
    </location>
</feature>
<feature type="binding site" evidence="1">
    <location>
        <position position="24"/>
    </location>
    <ligand>
        <name>Zn(2+)</name>
        <dbReference type="ChEBI" id="CHEBI:29105"/>
    </ligand>
</feature>
<feature type="binding site" evidence="1">
    <location>
        <position position="27"/>
    </location>
    <ligand>
        <name>Zn(2+)</name>
        <dbReference type="ChEBI" id="CHEBI:29105"/>
    </ligand>
</feature>
<feature type="binding site" evidence="1">
    <location>
        <position position="40"/>
    </location>
    <ligand>
        <name>Zn(2+)</name>
        <dbReference type="ChEBI" id="CHEBI:29105"/>
    </ligand>
</feature>
<feature type="binding site" evidence="1">
    <location>
        <position position="43"/>
    </location>
    <ligand>
        <name>Zn(2+)</name>
        <dbReference type="ChEBI" id="CHEBI:29105"/>
    </ligand>
</feature>
<name>RS14Z_MYXXD</name>
<organism>
    <name type="scientific">Myxococcus xanthus (strain DK1622)</name>
    <dbReference type="NCBI Taxonomy" id="246197"/>
    <lineage>
        <taxon>Bacteria</taxon>
        <taxon>Pseudomonadati</taxon>
        <taxon>Myxococcota</taxon>
        <taxon>Myxococcia</taxon>
        <taxon>Myxococcales</taxon>
        <taxon>Cystobacterineae</taxon>
        <taxon>Myxococcaceae</taxon>
        <taxon>Myxococcus</taxon>
    </lineage>
</organism>
<comment type="function">
    <text evidence="1">Binds 16S rRNA, required for the assembly of 30S particles and may also be responsible for determining the conformation of the 16S rRNA at the A site.</text>
</comment>
<comment type="cofactor">
    <cofactor evidence="1">
        <name>Zn(2+)</name>
        <dbReference type="ChEBI" id="CHEBI:29105"/>
    </cofactor>
    <text evidence="1">Binds 1 zinc ion per subunit.</text>
</comment>
<comment type="subunit">
    <text evidence="1">Part of the 30S ribosomal subunit. Contacts proteins S3 and S10.</text>
</comment>
<comment type="similarity">
    <text evidence="1">Belongs to the universal ribosomal protein uS14 family. Zinc-binding uS14 subfamily.</text>
</comment>
<proteinExistence type="inferred from homology"/>
<sequence length="61" mass="7143">MAKLSKIAQAKRKPKFSVRQYNRCPLCGRPRAFLRKFKMCRICLRNRALRGEVTGVTKSSW</sequence>
<keyword id="KW-0479">Metal-binding</keyword>
<keyword id="KW-1185">Reference proteome</keyword>
<keyword id="KW-0687">Ribonucleoprotein</keyword>
<keyword id="KW-0689">Ribosomal protein</keyword>
<keyword id="KW-0694">RNA-binding</keyword>
<keyword id="KW-0699">rRNA-binding</keyword>
<keyword id="KW-0862">Zinc</keyword>